<keyword id="KW-0997">Cell inner membrane</keyword>
<keyword id="KW-1003">Cell membrane</keyword>
<keyword id="KW-0472">Membrane</keyword>
<keyword id="KW-1185">Reference proteome</keyword>
<keyword id="KW-0808">Transferase</keyword>
<keyword id="KW-0812">Transmembrane</keyword>
<keyword id="KW-1133">Transmembrane helix</keyword>
<sequence>MTSSYLHFPEFDPVIFSIGPVALHWYGLMYLVGFIFAMWLATRRANRPGSGWTKNEVENLLYAGFLGVFLGGRIGYVLFYNFPQFMADPLYLFRVWDGGMSFHGGLIGVIVVMIIFARRTKRSFFQVSDFIAPLIPFGLGAGRLGNFINGELWGRVDPNFPFAMLFPGSRTEDILLLQTNPQWQSIFDTYGVLPRHPSQLYELLLEGVVLFIILNLYIRKPRPMGAVSGLFLIGYGAFRIIVEFFRQPDAQFTGAWVQYISMGQILSIPMIVAGVIMMVWAYRRSPQQHVS</sequence>
<feature type="chain" id="PRO_0000172670" description="Phosphatidylglycerol--prolipoprotein diacylglyceryl transferase">
    <location>
        <begin position="1"/>
        <end position="291"/>
    </location>
</feature>
<feature type="transmembrane region" description="Helical" evidence="1">
    <location>
        <begin position="21"/>
        <end position="41"/>
    </location>
</feature>
<feature type="transmembrane region" description="Helical" evidence="1">
    <location>
        <begin position="60"/>
        <end position="80"/>
    </location>
</feature>
<feature type="transmembrane region" description="Helical" evidence="1">
    <location>
        <begin position="96"/>
        <end position="116"/>
    </location>
</feature>
<feature type="transmembrane region" description="Helical" evidence="1">
    <location>
        <begin position="130"/>
        <end position="150"/>
    </location>
</feature>
<feature type="transmembrane region" description="Helical" evidence="1">
    <location>
        <begin position="198"/>
        <end position="218"/>
    </location>
</feature>
<feature type="transmembrane region" description="Helical" evidence="1">
    <location>
        <begin position="225"/>
        <end position="245"/>
    </location>
</feature>
<feature type="transmembrane region" description="Helical" evidence="1">
    <location>
        <begin position="260"/>
        <end position="280"/>
    </location>
</feature>
<feature type="binding site" evidence="1">
    <location>
        <position position="143"/>
    </location>
    <ligand>
        <name>a 1,2-diacyl-sn-glycero-3-phospho-(1'-sn-glycerol)</name>
        <dbReference type="ChEBI" id="CHEBI:64716"/>
    </ligand>
</feature>
<reference key="1">
    <citation type="journal article" date="2002" name="Nucleic Acids Res.">
        <title>Genome sequence of Shigella flexneri 2a: insights into pathogenicity through comparison with genomes of Escherichia coli K12 and O157.</title>
        <authorList>
            <person name="Jin Q."/>
            <person name="Yuan Z."/>
            <person name="Xu J."/>
            <person name="Wang Y."/>
            <person name="Shen Y."/>
            <person name="Lu W."/>
            <person name="Wang J."/>
            <person name="Liu H."/>
            <person name="Yang J."/>
            <person name="Yang F."/>
            <person name="Zhang X."/>
            <person name="Zhang J."/>
            <person name="Yang G."/>
            <person name="Wu H."/>
            <person name="Qu D."/>
            <person name="Dong J."/>
            <person name="Sun L."/>
            <person name="Xue Y."/>
            <person name="Zhao A."/>
            <person name="Gao Y."/>
            <person name="Zhu J."/>
            <person name="Kan B."/>
            <person name="Ding K."/>
            <person name="Chen S."/>
            <person name="Cheng H."/>
            <person name="Yao Z."/>
            <person name="He B."/>
            <person name="Chen R."/>
            <person name="Ma D."/>
            <person name="Qiang B."/>
            <person name="Wen Y."/>
            <person name="Hou Y."/>
            <person name="Yu J."/>
        </authorList>
    </citation>
    <scope>NUCLEOTIDE SEQUENCE [LARGE SCALE GENOMIC DNA]</scope>
    <source>
        <strain>301 / Serotype 2a</strain>
    </source>
</reference>
<reference key="2">
    <citation type="journal article" date="2003" name="Infect. Immun.">
        <title>Complete genome sequence and comparative genomics of Shigella flexneri serotype 2a strain 2457T.</title>
        <authorList>
            <person name="Wei J."/>
            <person name="Goldberg M.B."/>
            <person name="Burland V."/>
            <person name="Venkatesan M.M."/>
            <person name="Deng W."/>
            <person name="Fournier G."/>
            <person name="Mayhew G.F."/>
            <person name="Plunkett G. III"/>
            <person name="Rose D.J."/>
            <person name="Darling A."/>
            <person name="Mau B."/>
            <person name="Perna N.T."/>
            <person name="Payne S.M."/>
            <person name="Runyen-Janecky L.J."/>
            <person name="Zhou S."/>
            <person name="Schwartz D.C."/>
            <person name="Blattner F.R."/>
        </authorList>
    </citation>
    <scope>NUCLEOTIDE SEQUENCE [LARGE SCALE GENOMIC DNA]</scope>
    <source>
        <strain>ATCC 700930 / 2457T / Serotype 2a</strain>
    </source>
</reference>
<gene>
    <name evidence="1" type="primary">lgt</name>
    <name type="ordered locus">SF2838</name>
    <name type="ordered locus">S3036</name>
</gene>
<accession>P60960</accession>
<accession>P37149</accession>
<dbReference type="EC" id="2.5.1.145" evidence="1"/>
<dbReference type="EMBL" id="AE005674">
    <property type="protein sequence ID" value="AAN44324.1"/>
    <property type="molecule type" value="Genomic_DNA"/>
</dbReference>
<dbReference type="EMBL" id="AE014073">
    <property type="protein sequence ID" value="AAP18150.1"/>
    <property type="molecule type" value="Genomic_DNA"/>
</dbReference>
<dbReference type="RefSeq" id="NP_708617.1">
    <property type="nucleotide sequence ID" value="NC_004337.2"/>
</dbReference>
<dbReference type="RefSeq" id="WP_000204658.1">
    <property type="nucleotide sequence ID" value="NZ_WPGW01000008.1"/>
</dbReference>
<dbReference type="SMR" id="P60960"/>
<dbReference type="STRING" id="198214.SF2838"/>
<dbReference type="PaxDb" id="198214-SF2838"/>
<dbReference type="GeneID" id="1025806"/>
<dbReference type="GeneID" id="93779170"/>
<dbReference type="KEGG" id="sfl:SF2838"/>
<dbReference type="KEGG" id="sfx:S3036"/>
<dbReference type="PATRIC" id="fig|198214.7.peg.3378"/>
<dbReference type="HOGENOM" id="CLU_013386_1_0_6"/>
<dbReference type="UniPathway" id="UPA00664"/>
<dbReference type="Proteomes" id="UP000001006">
    <property type="component" value="Chromosome"/>
</dbReference>
<dbReference type="Proteomes" id="UP000002673">
    <property type="component" value="Chromosome"/>
</dbReference>
<dbReference type="GO" id="GO:0005886">
    <property type="term" value="C:plasma membrane"/>
    <property type="evidence" value="ECO:0007669"/>
    <property type="project" value="UniProtKB-SubCell"/>
</dbReference>
<dbReference type="GO" id="GO:0008961">
    <property type="term" value="F:phosphatidylglycerol-prolipoprotein diacylglyceryl transferase activity"/>
    <property type="evidence" value="ECO:0007669"/>
    <property type="project" value="UniProtKB-UniRule"/>
</dbReference>
<dbReference type="GO" id="GO:0042158">
    <property type="term" value="P:lipoprotein biosynthetic process"/>
    <property type="evidence" value="ECO:0007669"/>
    <property type="project" value="UniProtKB-UniRule"/>
</dbReference>
<dbReference type="HAMAP" id="MF_01147">
    <property type="entry name" value="Lgt"/>
    <property type="match status" value="1"/>
</dbReference>
<dbReference type="InterPro" id="IPR001640">
    <property type="entry name" value="Lgt"/>
</dbReference>
<dbReference type="NCBIfam" id="TIGR00544">
    <property type="entry name" value="lgt"/>
    <property type="match status" value="1"/>
</dbReference>
<dbReference type="PANTHER" id="PTHR30589:SF0">
    <property type="entry name" value="PHOSPHATIDYLGLYCEROL--PROLIPOPROTEIN DIACYLGLYCERYL TRANSFERASE"/>
    <property type="match status" value="1"/>
</dbReference>
<dbReference type="PANTHER" id="PTHR30589">
    <property type="entry name" value="PROLIPOPROTEIN DIACYLGLYCERYL TRANSFERASE"/>
    <property type="match status" value="1"/>
</dbReference>
<dbReference type="Pfam" id="PF01790">
    <property type="entry name" value="LGT"/>
    <property type="match status" value="1"/>
</dbReference>
<dbReference type="PROSITE" id="PS01311">
    <property type="entry name" value="LGT"/>
    <property type="match status" value="1"/>
</dbReference>
<proteinExistence type="inferred from homology"/>
<protein>
    <recommendedName>
        <fullName evidence="1">Phosphatidylglycerol--prolipoprotein diacylglyceryl transferase</fullName>
        <ecNumber evidence="1">2.5.1.145</ecNumber>
    </recommendedName>
</protein>
<evidence type="ECO:0000255" key="1">
    <source>
        <dbReference type="HAMAP-Rule" id="MF_01147"/>
    </source>
</evidence>
<evidence type="ECO:0000305" key="2"/>
<comment type="function">
    <text evidence="1">Catalyzes the transfer of the diacylglyceryl group from phosphatidylglycerol to the sulfhydryl group of the N-terminal cysteine of a prolipoprotein, the first step in the formation of mature lipoproteins.</text>
</comment>
<comment type="catalytic activity">
    <reaction evidence="1">
        <text>L-cysteinyl-[prolipoprotein] + a 1,2-diacyl-sn-glycero-3-phospho-(1'-sn-glycerol) = an S-1,2-diacyl-sn-glyceryl-L-cysteinyl-[prolipoprotein] + sn-glycerol 1-phosphate + H(+)</text>
        <dbReference type="Rhea" id="RHEA:56712"/>
        <dbReference type="Rhea" id="RHEA-COMP:14679"/>
        <dbReference type="Rhea" id="RHEA-COMP:14680"/>
        <dbReference type="ChEBI" id="CHEBI:15378"/>
        <dbReference type="ChEBI" id="CHEBI:29950"/>
        <dbReference type="ChEBI" id="CHEBI:57685"/>
        <dbReference type="ChEBI" id="CHEBI:64716"/>
        <dbReference type="ChEBI" id="CHEBI:140658"/>
        <dbReference type="EC" id="2.5.1.145"/>
    </reaction>
</comment>
<comment type="pathway">
    <text evidence="1">Protein modification; lipoprotein biosynthesis (diacylglyceryl transfer).</text>
</comment>
<comment type="subcellular location">
    <subcellularLocation>
        <location evidence="1">Cell inner membrane</location>
        <topology evidence="1">Multi-pass membrane protein</topology>
    </subcellularLocation>
</comment>
<comment type="similarity">
    <text evidence="1 2">Belongs to the Lgt family.</text>
</comment>
<name>LGT_SHIFL</name>
<organism>
    <name type="scientific">Shigella flexneri</name>
    <dbReference type="NCBI Taxonomy" id="623"/>
    <lineage>
        <taxon>Bacteria</taxon>
        <taxon>Pseudomonadati</taxon>
        <taxon>Pseudomonadota</taxon>
        <taxon>Gammaproteobacteria</taxon>
        <taxon>Enterobacterales</taxon>
        <taxon>Enterobacteriaceae</taxon>
        <taxon>Shigella</taxon>
    </lineage>
</organism>